<comment type="cofactor">
    <cofactor evidence="1">
        <name>Zn(2+)</name>
        <dbReference type="ChEBI" id="CHEBI:29105"/>
    </cofactor>
    <text evidence="1">Binds 1 zinc ion per subunit.</text>
</comment>
<comment type="subcellular location">
    <subcellularLocation>
        <location evidence="1">Cell membrane</location>
        <topology evidence="1">Multi-pass membrane protein</topology>
    </subcellularLocation>
</comment>
<comment type="similarity">
    <text evidence="1">Belongs to the peptidase M48B family.</text>
</comment>
<sequence length="291" mass="32207">MMYSFIARNKINTFLILFVFILACGGFGLLAGRFLGMSFFLFILLLAAGYACVQYFFSGRLAVLMSGARKISRNDNPRLWNTVENLSITTGLPMPEVYIVDDPAPNAFATGRDPKHAKVAATSGLLEILDDSELEGVMAHEMGHVKNYDIRVSTIVFGLVSAVGLISDMVLRALIWGDNRREGNSAFSFVIVLFFSLLAPIAAMLVQLAVSREREYLADATGALTTRYPAALASALAKLEGNARPLQRQSSSMAHLWISNPMPRGFFRKLFSTHPPTEERIRRLKEMGNQF</sequence>
<accession>Q83H47</accession>
<gene>
    <name evidence="1" type="primary">htpX</name>
    <name type="synonym">twt013</name>
    <name type="ordered locus">TWT_013</name>
</gene>
<protein>
    <recommendedName>
        <fullName evidence="1">Protease HtpX homolog</fullName>
        <ecNumber evidence="1">3.4.24.-</ecNumber>
    </recommendedName>
</protein>
<reference key="1">
    <citation type="journal article" date="2003" name="Genome Res.">
        <title>Tropheryma whipplei twist: a human pathogenic Actinobacteria with a reduced genome.</title>
        <authorList>
            <person name="Raoult D."/>
            <person name="Ogata H."/>
            <person name="Audic S."/>
            <person name="Robert C."/>
            <person name="Suhre K."/>
            <person name="Drancourt M."/>
            <person name="Claverie J.-M."/>
        </authorList>
    </citation>
    <scope>NUCLEOTIDE SEQUENCE [LARGE SCALE GENOMIC DNA]</scope>
    <source>
        <strain>Twist</strain>
    </source>
</reference>
<feature type="chain" id="PRO_1000020964" description="Protease HtpX homolog">
    <location>
        <begin position="1"/>
        <end position="291"/>
    </location>
</feature>
<feature type="transmembrane region" description="Helical" evidence="1">
    <location>
        <begin position="11"/>
        <end position="31"/>
    </location>
</feature>
<feature type="transmembrane region" description="Helical" evidence="1">
    <location>
        <begin position="34"/>
        <end position="54"/>
    </location>
</feature>
<feature type="transmembrane region" description="Helical" evidence="1">
    <location>
        <begin position="155"/>
        <end position="175"/>
    </location>
</feature>
<feature type="transmembrane region" description="Helical" evidence="1">
    <location>
        <begin position="186"/>
        <end position="206"/>
    </location>
</feature>
<feature type="active site" evidence="1">
    <location>
        <position position="141"/>
    </location>
</feature>
<feature type="binding site" evidence="1">
    <location>
        <position position="140"/>
    </location>
    <ligand>
        <name>Zn(2+)</name>
        <dbReference type="ChEBI" id="CHEBI:29105"/>
        <note>catalytic</note>
    </ligand>
</feature>
<feature type="binding site" evidence="1">
    <location>
        <position position="144"/>
    </location>
    <ligand>
        <name>Zn(2+)</name>
        <dbReference type="ChEBI" id="CHEBI:29105"/>
        <note>catalytic</note>
    </ligand>
</feature>
<feature type="binding site" evidence="1">
    <location>
        <position position="215"/>
    </location>
    <ligand>
        <name>Zn(2+)</name>
        <dbReference type="ChEBI" id="CHEBI:29105"/>
        <note>catalytic</note>
    </ligand>
</feature>
<proteinExistence type="inferred from homology"/>
<dbReference type="EC" id="3.4.24.-" evidence="1"/>
<dbReference type="EMBL" id="AE014184">
    <property type="protein sequence ID" value="AAO44110.1"/>
    <property type="molecule type" value="Genomic_DNA"/>
</dbReference>
<dbReference type="SMR" id="Q83H47"/>
<dbReference type="STRING" id="203267.TWT_013"/>
<dbReference type="KEGG" id="twh:TWT_013"/>
<dbReference type="eggNOG" id="COG0501">
    <property type="taxonomic scope" value="Bacteria"/>
</dbReference>
<dbReference type="HOGENOM" id="CLU_042266_3_0_11"/>
<dbReference type="OrthoDB" id="15218at2"/>
<dbReference type="Proteomes" id="UP000002200">
    <property type="component" value="Chromosome"/>
</dbReference>
<dbReference type="GO" id="GO:0005886">
    <property type="term" value="C:plasma membrane"/>
    <property type="evidence" value="ECO:0007669"/>
    <property type="project" value="UniProtKB-SubCell"/>
</dbReference>
<dbReference type="GO" id="GO:0004222">
    <property type="term" value="F:metalloendopeptidase activity"/>
    <property type="evidence" value="ECO:0007669"/>
    <property type="project" value="UniProtKB-UniRule"/>
</dbReference>
<dbReference type="GO" id="GO:0008270">
    <property type="term" value="F:zinc ion binding"/>
    <property type="evidence" value="ECO:0007669"/>
    <property type="project" value="UniProtKB-UniRule"/>
</dbReference>
<dbReference type="GO" id="GO:0006508">
    <property type="term" value="P:proteolysis"/>
    <property type="evidence" value="ECO:0007669"/>
    <property type="project" value="UniProtKB-KW"/>
</dbReference>
<dbReference type="CDD" id="cd07340">
    <property type="entry name" value="M48B_Htpx_like"/>
    <property type="match status" value="1"/>
</dbReference>
<dbReference type="Gene3D" id="3.30.2010.10">
    <property type="entry name" value="Metalloproteases ('zincins'), catalytic domain"/>
    <property type="match status" value="1"/>
</dbReference>
<dbReference type="HAMAP" id="MF_00188">
    <property type="entry name" value="Pept_M48_protease_HtpX"/>
    <property type="match status" value="1"/>
</dbReference>
<dbReference type="InterPro" id="IPR050083">
    <property type="entry name" value="HtpX_protease"/>
</dbReference>
<dbReference type="InterPro" id="IPR022919">
    <property type="entry name" value="Pept_M48_protease_HtpX"/>
</dbReference>
<dbReference type="InterPro" id="IPR001915">
    <property type="entry name" value="Peptidase_M48"/>
</dbReference>
<dbReference type="PANTHER" id="PTHR43221">
    <property type="entry name" value="PROTEASE HTPX"/>
    <property type="match status" value="1"/>
</dbReference>
<dbReference type="PANTHER" id="PTHR43221:SF1">
    <property type="entry name" value="PROTEASE HTPX"/>
    <property type="match status" value="1"/>
</dbReference>
<dbReference type="Pfam" id="PF01435">
    <property type="entry name" value="Peptidase_M48"/>
    <property type="match status" value="1"/>
</dbReference>
<keyword id="KW-1003">Cell membrane</keyword>
<keyword id="KW-0378">Hydrolase</keyword>
<keyword id="KW-0472">Membrane</keyword>
<keyword id="KW-0479">Metal-binding</keyword>
<keyword id="KW-0482">Metalloprotease</keyword>
<keyword id="KW-0645">Protease</keyword>
<keyword id="KW-1185">Reference proteome</keyword>
<keyword id="KW-0812">Transmembrane</keyword>
<keyword id="KW-1133">Transmembrane helix</keyword>
<keyword id="KW-0862">Zinc</keyword>
<evidence type="ECO:0000255" key="1">
    <source>
        <dbReference type="HAMAP-Rule" id="MF_00188"/>
    </source>
</evidence>
<organism>
    <name type="scientific">Tropheryma whipplei (strain Twist)</name>
    <name type="common">Whipple's bacillus</name>
    <dbReference type="NCBI Taxonomy" id="203267"/>
    <lineage>
        <taxon>Bacteria</taxon>
        <taxon>Bacillati</taxon>
        <taxon>Actinomycetota</taxon>
        <taxon>Actinomycetes</taxon>
        <taxon>Micrococcales</taxon>
        <taxon>Tropherymataceae</taxon>
        <taxon>Tropheryma</taxon>
    </lineage>
</organism>
<name>HTPX_TROWT</name>